<organism>
    <name type="scientific">Sulfolobus acidocaldarius (strain ATCC 33909 / DSM 639 / JCM 8929 / NBRC 15157 / NCIMB 11770)</name>
    <dbReference type="NCBI Taxonomy" id="330779"/>
    <lineage>
        <taxon>Archaea</taxon>
        <taxon>Thermoproteota</taxon>
        <taxon>Thermoprotei</taxon>
        <taxon>Sulfolobales</taxon>
        <taxon>Sulfolobaceae</taxon>
        <taxon>Sulfolobus</taxon>
    </lineage>
</organism>
<sequence>MCGIIGIVSSKEDKKIADKVISALKRLEYRGYDSVGVASLDNNKLEVRKAKGTVEEVISKKKVSEMSGYIFLGHTRWATHGPPTDYNAHPHVDCSGKIAVIHNGTIKNYKELREELQTLGHVFKSDTDTEIIPHLIEEFMKRGMDAYSAFRNSIKTLEGSYAVLAVIHGEKRIFFAKRDNPLVIGLGEKENYIASDIPAFLSYTKRILVIKDGELGFITTSNVFIEDKDGNPVDLSDRVRVIDWDVETASKEGYPHFMIKEIHESPKSIRDTVDSLISDLDLIDKIIAEMKSSGRIVVVGAGTSYHAGLYFSLLLSREGMNSFPLIASEYYNFKAKKDDLIFAISQSGETLDLLQAVRKFKEEGARIVSLTNVIESALARESNYKIYMRAGPEISVAATKTFITQLISLLFIYSRLRRDNTNKFRGADTEVERVISSVEGYAKLIGEELSKKTSIYYLGRGMSLPLAMEGALKIKEVAYVHAEAYPAGESKHGPISLVDKGFPIVAINDGEITDLLRNNVIEMKARGAKAYVISANKKISESDVEIYLDSIQFPALSISVVLQLIAYYASVSKGLNPDKPRNLAKTVTVE</sequence>
<accession>Q4J6D9</accession>
<evidence type="ECO:0000255" key="1">
    <source>
        <dbReference type="HAMAP-Rule" id="MF_00164"/>
    </source>
</evidence>
<protein>
    <recommendedName>
        <fullName evidence="1">Glutamine--fructose-6-phosphate aminotransferase [isomerizing]</fullName>
        <ecNumber evidence="1">2.6.1.16</ecNumber>
    </recommendedName>
    <alternativeName>
        <fullName evidence="1">D-fructose-6-phosphate amidotransferase</fullName>
    </alternativeName>
    <alternativeName>
        <fullName evidence="1">GFAT</fullName>
    </alternativeName>
    <alternativeName>
        <fullName evidence="1">Glucosamine-6-phosphate synthase</fullName>
    </alternativeName>
    <alternativeName>
        <fullName evidence="1">Hexosephosphate aminotransferase</fullName>
    </alternativeName>
    <alternativeName>
        <fullName evidence="1">L-glutamine--D-fructose-6-phosphate amidotransferase</fullName>
    </alternativeName>
</protein>
<name>GLMS_SULAC</name>
<dbReference type="EC" id="2.6.1.16" evidence="1"/>
<dbReference type="EMBL" id="CP000077">
    <property type="protein sequence ID" value="AAY81643.1"/>
    <property type="molecule type" value="Genomic_DNA"/>
</dbReference>
<dbReference type="RefSeq" id="WP_011279145.1">
    <property type="nucleotide sequence ID" value="NC_007181.1"/>
</dbReference>
<dbReference type="SMR" id="Q4J6D9"/>
<dbReference type="STRING" id="330779.Saci_2364"/>
<dbReference type="GeneID" id="14552874"/>
<dbReference type="GeneID" id="78440348"/>
<dbReference type="KEGG" id="sai:Saci_2364"/>
<dbReference type="PATRIC" id="fig|330779.12.peg.2370"/>
<dbReference type="eggNOG" id="arCOG00057">
    <property type="taxonomic scope" value="Archaea"/>
</dbReference>
<dbReference type="HOGENOM" id="CLU_012520_7_0_2"/>
<dbReference type="Proteomes" id="UP000001018">
    <property type="component" value="Chromosome"/>
</dbReference>
<dbReference type="GO" id="GO:0005737">
    <property type="term" value="C:cytoplasm"/>
    <property type="evidence" value="ECO:0007669"/>
    <property type="project" value="UniProtKB-SubCell"/>
</dbReference>
<dbReference type="GO" id="GO:0097367">
    <property type="term" value="F:carbohydrate derivative binding"/>
    <property type="evidence" value="ECO:0007669"/>
    <property type="project" value="InterPro"/>
</dbReference>
<dbReference type="GO" id="GO:0004360">
    <property type="term" value="F:glutamine-fructose-6-phosphate transaminase (isomerizing) activity"/>
    <property type="evidence" value="ECO:0007669"/>
    <property type="project" value="UniProtKB-UniRule"/>
</dbReference>
<dbReference type="GO" id="GO:0005975">
    <property type="term" value="P:carbohydrate metabolic process"/>
    <property type="evidence" value="ECO:0007669"/>
    <property type="project" value="UniProtKB-UniRule"/>
</dbReference>
<dbReference type="GO" id="GO:0006002">
    <property type="term" value="P:fructose 6-phosphate metabolic process"/>
    <property type="evidence" value="ECO:0007669"/>
    <property type="project" value="TreeGrafter"/>
</dbReference>
<dbReference type="GO" id="GO:0006487">
    <property type="term" value="P:protein N-linked glycosylation"/>
    <property type="evidence" value="ECO:0007669"/>
    <property type="project" value="TreeGrafter"/>
</dbReference>
<dbReference type="GO" id="GO:0006047">
    <property type="term" value="P:UDP-N-acetylglucosamine metabolic process"/>
    <property type="evidence" value="ECO:0007669"/>
    <property type="project" value="TreeGrafter"/>
</dbReference>
<dbReference type="CDD" id="cd00714">
    <property type="entry name" value="GFAT"/>
    <property type="match status" value="1"/>
</dbReference>
<dbReference type="CDD" id="cd05008">
    <property type="entry name" value="SIS_GlmS_GlmD_1"/>
    <property type="match status" value="1"/>
</dbReference>
<dbReference type="CDD" id="cd05009">
    <property type="entry name" value="SIS_GlmS_GlmD_2"/>
    <property type="match status" value="1"/>
</dbReference>
<dbReference type="FunFam" id="3.60.20.10:FF:000006">
    <property type="entry name" value="Glutamine--fructose-6-phosphate aminotransferase [isomerizing]"/>
    <property type="match status" value="1"/>
</dbReference>
<dbReference type="Gene3D" id="3.40.50.10490">
    <property type="entry name" value="Glucose-6-phosphate isomerase like protein, domain 1"/>
    <property type="match status" value="2"/>
</dbReference>
<dbReference type="Gene3D" id="3.60.20.10">
    <property type="entry name" value="Glutamine Phosphoribosylpyrophosphate, subunit 1, domain 1"/>
    <property type="match status" value="1"/>
</dbReference>
<dbReference type="HAMAP" id="MF_00164">
    <property type="entry name" value="GlmS"/>
    <property type="match status" value="1"/>
</dbReference>
<dbReference type="InterPro" id="IPR017932">
    <property type="entry name" value="GATase_2_dom"/>
</dbReference>
<dbReference type="InterPro" id="IPR005855">
    <property type="entry name" value="GFAT"/>
</dbReference>
<dbReference type="InterPro" id="IPR047084">
    <property type="entry name" value="GFAT_N"/>
</dbReference>
<dbReference type="InterPro" id="IPR035466">
    <property type="entry name" value="GlmS/AgaS_SIS"/>
</dbReference>
<dbReference type="InterPro" id="IPR035490">
    <property type="entry name" value="GlmS/FrlB_SIS"/>
</dbReference>
<dbReference type="InterPro" id="IPR029055">
    <property type="entry name" value="Ntn_hydrolases_N"/>
</dbReference>
<dbReference type="InterPro" id="IPR001347">
    <property type="entry name" value="SIS_dom"/>
</dbReference>
<dbReference type="InterPro" id="IPR046348">
    <property type="entry name" value="SIS_dom_sf"/>
</dbReference>
<dbReference type="NCBIfam" id="TIGR01135">
    <property type="entry name" value="glmS"/>
    <property type="match status" value="1"/>
</dbReference>
<dbReference type="NCBIfam" id="NF001484">
    <property type="entry name" value="PRK00331.1"/>
    <property type="match status" value="1"/>
</dbReference>
<dbReference type="PANTHER" id="PTHR10937">
    <property type="entry name" value="GLUCOSAMINE--FRUCTOSE-6-PHOSPHATE AMINOTRANSFERASE, ISOMERIZING"/>
    <property type="match status" value="1"/>
</dbReference>
<dbReference type="PANTHER" id="PTHR10937:SF0">
    <property type="entry name" value="GLUTAMINE--FRUCTOSE-6-PHOSPHATE TRANSAMINASE (ISOMERIZING)"/>
    <property type="match status" value="1"/>
</dbReference>
<dbReference type="Pfam" id="PF13522">
    <property type="entry name" value="GATase_6"/>
    <property type="match status" value="1"/>
</dbReference>
<dbReference type="Pfam" id="PF01380">
    <property type="entry name" value="SIS"/>
    <property type="match status" value="2"/>
</dbReference>
<dbReference type="SUPFAM" id="SSF56235">
    <property type="entry name" value="N-terminal nucleophile aminohydrolases (Ntn hydrolases)"/>
    <property type="match status" value="1"/>
</dbReference>
<dbReference type="SUPFAM" id="SSF53697">
    <property type="entry name" value="SIS domain"/>
    <property type="match status" value="1"/>
</dbReference>
<dbReference type="PROSITE" id="PS51278">
    <property type="entry name" value="GATASE_TYPE_2"/>
    <property type="match status" value="1"/>
</dbReference>
<dbReference type="PROSITE" id="PS51464">
    <property type="entry name" value="SIS"/>
    <property type="match status" value="2"/>
</dbReference>
<reference key="1">
    <citation type="journal article" date="2005" name="J. Bacteriol.">
        <title>The genome of Sulfolobus acidocaldarius, a model organism of the Crenarchaeota.</title>
        <authorList>
            <person name="Chen L."/>
            <person name="Bruegger K."/>
            <person name="Skovgaard M."/>
            <person name="Redder P."/>
            <person name="She Q."/>
            <person name="Torarinsson E."/>
            <person name="Greve B."/>
            <person name="Awayez M."/>
            <person name="Zibat A."/>
            <person name="Klenk H.-P."/>
            <person name="Garrett R.A."/>
        </authorList>
    </citation>
    <scope>NUCLEOTIDE SEQUENCE [LARGE SCALE GENOMIC DNA]</scope>
    <source>
        <strain>ATCC 33909 / DSM 639 / JCM 8929 / NBRC 15157 / NCIMB 11770</strain>
    </source>
</reference>
<proteinExistence type="inferred from homology"/>
<feature type="initiator methionine" description="Removed" evidence="1">
    <location>
        <position position="1"/>
    </location>
</feature>
<feature type="chain" id="PRO_0000135433" description="Glutamine--fructose-6-phosphate aminotransferase [isomerizing]">
    <location>
        <begin position="2"/>
        <end position="590"/>
    </location>
</feature>
<feature type="domain" description="Glutamine amidotransferase type-2" evidence="1">
    <location>
        <begin position="2"/>
        <end position="221"/>
    </location>
</feature>
<feature type="domain" description="SIS 1" evidence="1">
    <location>
        <begin position="286"/>
        <end position="422"/>
    </location>
</feature>
<feature type="domain" description="SIS 2" evidence="1">
    <location>
        <begin position="445"/>
        <end position="580"/>
    </location>
</feature>
<feature type="active site" description="Nucleophile; for GATase activity" evidence="1">
    <location>
        <position position="2"/>
    </location>
</feature>
<feature type="active site" description="For Fru-6P isomerization activity" evidence="1">
    <location>
        <position position="585"/>
    </location>
</feature>
<gene>
    <name evidence="1" type="primary">glmS</name>
    <name type="ordered locus">Saci_2364</name>
</gene>
<keyword id="KW-0032">Aminotransferase</keyword>
<keyword id="KW-0963">Cytoplasm</keyword>
<keyword id="KW-0315">Glutamine amidotransferase</keyword>
<keyword id="KW-1185">Reference proteome</keyword>
<keyword id="KW-0677">Repeat</keyword>
<keyword id="KW-0808">Transferase</keyword>
<comment type="function">
    <text evidence="1">Catalyzes the first step in hexosamine metabolism, converting fructose-6P into glucosamine-6P using glutamine as a nitrogen source.</text>
</comment>
<comment type="catalytic activity">
    <reaction evidence="1">
        <text>D-fructose 6-phosphate + L-glutamine = D-glucosamine 6-phosphate + L-glutamate</text>
        <dbReference type="Rhea" id="RHEA:13237"/>
        <dbReference type="ChEBI" id="CHEBI:29985"/>
        <dbReference type="ChEBI" id="CHEBI:58359"/>
        <dbReference type="ChEBI" id="CHEBI:58725"/>
        <dbReference type="ChEBI" id="CHEBI:61527"/>
        <dbReference type="EC" id="2.6.1.16"/>
    </reaction>
</comment>
<comment type="subunit">
    <text evidence="1">Homodimer.</text>
</comment>
<comment type="subcellular location">
    <subcellularLocation>
        <location evidence="1">Cytoplasm</location>
    </subcellularLocation>
</comment>